<feature type="chain" id="PRO_0000178461" description="Large ribosomal subunit protein bL28">
    <location>
        <begin position="1"/>
        <end position="78"/>
    </location>
</feature>
<feature type="region of interest" description="Disordered" evidence="2">
    <location>
        <begin position="1"/>
        <end position="28"/>
    </location>
</feature>
<evidence type="ECO:0000255" key="1">
    <source>
        <dbReference type="HAMAP-Rule" id="MF_00373"/>
    </source>
</evidence>
<evidence type="ECO:0000256" key="2">
    <source>
        <dbReference type="SAM" id="MobiDB-lite"/>
    </source>
</evidence>
<evidence type="ECO:0000305" key="3"/>
<dbReference type="EMBL" id="BX248356">
    <property type="protein sequence ID" value="CAE49368.1"/>
    <property type="molecule type" value="Genomic_DNA"/>
</dbReference>
<dbReference type="RefSeq" id="WP_003850745.1">
    <property type="nucleotide sequence ID" value="NC_002935.2"/>
</dbReference>
<dbReference type="SMR" id="Q6NIC6"/>
<dbReference type="STRING" id="257309.DIP0851"/>
<dbReference type="GeneID" id="97331559"/>
<dbReference type="KEGG" id="cdi:DIP0851"/>
<dbReference type="HOGENOM" id="CLU_064548_3_1_11"/>
<dbReference type="Proteomes" id="UP000002198">
    <property type="component" value="Chromosome"/>
</dbReference>
<dbReference type="GO" id="GO:1990904">
    <property type="term" value="C:ribonucleoprotein complex"/>
    <property type="evidence" value="ECO:0007669"/>
    <property type="project" value="UniProtKB-KW"/>
</dbReference>
<dbReference type="GO" id="GO:0005840">
    <property type="term" value="C:ribosome"/>
    <property type="evidence" value="ECO:0007669"/>
    <property type="project" value="UniProtKB-KW"/>
</dbReference>
<dbReference type="GO" id="GO:0003735">
    <property type="term" value="F:structural constituent of ribosome"/>
    <property type="evidence" value="ECO:0007669"/>
    <property type="project" value="InterPro"/>
</dbReference>
<dbReference type="GO" id="GO:0006412">
    <property type="term" value="P:translation"/>
    <property type="evidence" value="ECO:0007669"/>
    <property type="project" value="UniProtKB-UniRule"/>
</dbReference>
<dbReference type="FunFam" id="2.30.170.40:FF:000001">
    <property type="entry name" value="50S ribosomal protein L28"/>
    <property type="match status" value="1"/>
</dbReference>
<dbReference type="Gene3D" id="2.30.170.40">
    <property type="entry name" value="Ribosomal protein L28/L24"/>
    <property type="match status" value="1"/>
</dbReference>
<dbReference type="HAMAP" id="MF_00373">
    <property type="entry name" value="Ribosomal_bL28"/>
    <property type="match status" value="1"/>
</dbReference>
<dbReference type="InterPro" id="IPR026569">
    <property type="entry name" value="Ribosomal_bL28"/>
</dbReference>
<dbReference type="InterPro" id="IPR034704">
    <property type="entry name" value="Ribosomal_bL28/bL31-like_sf"/>
</dbReference>
<dbReference type="InterPro" id="IPR001383">
    <property type="entry name" value="Ribosomal_bL28_bact-type"/>
</dbReference>
<dbReference type="InterPro" id="IPR037147">
    <property type="entry name" value="Ribosomal_bL28_sf"/>
</dbReference>
<dbReference type="NCBIfam" id="TIGR00009">
    <property type="entry name" value="L28"/>
    <property type="match status" value="1"/>
</dbReference>
<dbReference type="PANTHER" id="PTHR13528">
    <property type="entry name" value="39S RIBOSOMAL PROTEIN L28, MITOCHONDRIAL"/>
    <property type="match status" value="1"/>
</dbReference>
<dbReference type="PANTHER" id="PTHR13528:SF2">
    <property type="entry name" value="LARGE RIBOSOMAL SUBUNIT PROTEIN BL28M"/>
    <property type="match status" value="1"/>
</dbReference>
<dbReference type="Pfam" id="PF00830">
    <property type="entry name" value="Ribosomal_L28"/>
    <property type="match status" value="1"/>
</dbReference>
<dbReference type="SUPFAM" id="SSF143800">
    <property type="entry name" value="L28p-like"/>
    <property type="match status" value="1"/>
</dbReference>
<comment type="similarity">
    <text evidence="1">Belongs to the bacterial ribosomal protein bL28 family.</text>
</comment>
<accession>Q6NIC6</accession>
<organism>
    <name type="scientific">Corynebacterium diphtheriae (strain ATCC 700971 / NCTC 13129 / Biotype gravis)</name>
    <dbReference type="NCBI Taxonomy" id="257309"/>
    <lineage>
        <taxon>Bacteria</taxon>
        <taxon>Bacillati</taxon>
        <taxon>Actinomycetota</taxon>
        <taxon>Actinomycetes</taxon>
        <taxon>Mycobacteriales</taxon>
        <taxon>Corynebacteriaceae</taxon>
        <taxon>Corynebacterium</taxon>
    </lineage>
</organism>
<protein>
    <recommendedName>
        <fullName evidence="1">Large ribosomal subunit protein bL28</fullName>
    </recommendedName>
    <alternativeName>
        <fullName evidence="3">50S ribosomal protein L28</fullName>
    </alternativeName>
</protein>
<keyword id="KW-1185">Reference proteome</keyword>
<keyword id="KW-0687">Ribonucleoprotein</keyword>
<keyword id="KW-0689">Ribosomal protein</keyword>
<gene>
    <name evidence="1" type="primary">rpmB</name>
    <name type="ordered locus">DIP0851</name>
</gene>
<proteinExistence type="inferred from homology"/>
<name>RL28_CORDI</name>
<reference key="1">
    <citation type="journal article" date="2003" name="Nucleic Acids Res.">
        <title>The complete genome sequence and analysis of Corynebacterium diphtheriae NCTC13129.</title>
        <authorList>
            <person name="Cerdeno-Tarraga A.-M."/>
            <person name="Efstratiou A."/>
            <person name="Dover L.G."/>
            <person name="Holden M.T.G."/>
            <person name="Pallen M.J."/>
            <person name="Bentley S.D."/>
            <person name="Besra G.S."/>
            <person name="Churcher C.M."/>
            <person name="James K.D."/>
            <person name="De Zoysa A."/>
            <person name="Chillingworth T."/>
            <person name="Cronin A."/>
            <person name="Dowd L."/>
            <person name="Feltwell T."/>
            <person name="Hamlin N."/>
            <person name="Holroyd S."/>
            <person name="Jagels K."/>
            <person name="Moule S."/>
            <person name="Quail M.A."/>
            <person name="Rabbinowitsch E."/>
            <person name="Rutherford K.M."/>
            <person name="Thomson N.R."/>
            <person name="Unwin L."/>
            <person name="Whitehead S."/>
            <person name="Barrell B.G."/>
            <person name="Parkhill J."/>
        </authorList>
    </citation>
    <scope>NUCLEOTIDE SEQUENCE [LARGE SCALE GENOMIC DNA]</scope>
    <source>
        <strain>ATCC 700971 / NCTC 13129 / Biotype gravis</strain>
    </source>
</reference>
<sequence length="78" mass="8836">MSAICQVTGRQPGYGKSVSHSHRRTSRRWNPNVQRRKFYLPSEGRTITLNVSTKGLKVIDRDGIESVVAKIRARGEKI</sequence>